<organism>
    <name type="scientific">Aromatoleum aromaticum (strain DSM 19018 / LMG 30748 / EbN1)</name>
    <name type="common">Azoarcus sp. (strain EbN1)</name>
    <dbReference type="NCBI Taxonomy" id="76114"/>
    <lineage>
        <taxon>Bacteria</taxon>
        <taxon>Pseudomonadati</taxon>
        <taxon>Pseudomonadota</taxon>
        <taxon>Betaproteobacteria</taxon>
        <taxon>Rhodocyclales</taxon>
        <taxon>Rhodocyclaceae</taxon>
        <taxon>Aromatoleum</taxon>
    </lineage>
</organism>
<comment type="function">
    <text evidence="1">Catalyzes the hydroxylation of 2-nonaprenyl-3-methyl-6-methoxy-1,4-benzoquinol during ubiquinone biosynthesis.</text>
</comment>
<comment type="catalytic activity">
    <reaction evidence="1">
        <text>a 5-methoxy-2-methyl-3-(all-trans-polyprenyl)benzene-1,4-diol + AH2 + O2 = a 3-demethylubiquinol + A + H2O</text>
        <dbReference type="Rhea" id="RHEA:50908"/>
        <dbReference type="Rhea" id="RHEA-COMP:10859"/>
        <dbReference type="Rhea" id="RHEA-COMP:10914"/>
        <dbReference type="ChEBI" id="CHEBI:13193"/>
        <dbReference type="ChEBI" id="CHEBI:15377"/>
        <dbReference type="ChEBI" id="CHEBI:15379"/>
        <dbReference type="ChEBI" id="CHEBI:17499"/>
        <dbReference type="ChEBI" id="CHEBI:84167"/>
        <dbReference type="ChEBI" id="CHEBI:84422"/>
        <dbReference type="EC" id="1.14.99.60"/>
    </reaction>
</comment>
<comment type="cofactor">
    <cofactor evidence="1">
        <name>Fe cation</name>
        <dbReference type="ChEBI" id="CHEBI:24875"/>
    </cofactor>
    <text evidence="1">Binds 2 iron ions per subunit.</text>
</comment>
<comment type="pathway">
    <text evidence="1">Cofactor biosynthesis; ubiquinone biosynthesis.</text>
</comment>
<comment type="subcellular location">
    <subcellularLocation>
        <location evidence="1">Cell membrane</location>
        <topology evidence="1">Peripheral membrane protein</topology>
    </subcellularLocation>
</comment>
<comment type="similarity">
    <text evidence="1">Belongs to the COQ7 family.</text>
</comment>
<sequence>MIDEAIVQFDKALRTLFAPARSVRPTPGAGVPETHLGDRDRQHVAALMRVNHSGEICAQALYQGQSMSAGDLDVKRELARASDEETEHLAWTEQRISELGGRKSLLNPLWYGGSLALGLLAGRLGDRWSLGFLAETERQVEAHLDGHLEHLPPEDHKSREIIEQMKADEAHHADVALALGAHELPAPFRGAMRLMARVMTATAYRI</sequence>
<reference key="1">
    <citation type="journal article" date="2005" name="Arch. Microbiol.">
        <title>The genome sequence of an anaerobic aromatic-degrading denitrifying bacterium, strain EbN1.</title>
        <authorList>
            <person name="Rabus R."/>
            <person name="Kube M."/>
            <person name="Heider J."/>
            <person name="Beck A."/>
            <person name="Heitmann K."/>
            <person name="Widdel F."/>
            <person name="Reinhardt R."/>
        </authorList>
    </citation>
    <scope>NUCLEOTIDE SEQUENCE [LARGE SCALE GENOMIC DNA]</scope>
    <source>
        <strain>DSM 19018 / LMG 30748 / EbN1</strain>
    </source>
</reference>
<keyword id="KW-1003">Cell membrane</keyword>
<keyword id="KW-0408">Iron</keyword>
<keyword id="KW-0472">Membrane</keyword>
<keyword id="KW-0479">Metal-binding</keyword>
<keyword id="KW-0503">Monooxygenase</keyword>
<keyword id="KW-0560">Oxidoreductase</keyword>
<keyword id="KW-1185">Reference proteome</keyword>
<keyword id="KW-0831">Ubiquinone biosynthesis</keyword>
<accession>Q5P7T5</accession>
<feature type="chain" id="PRO_0000338656" description="3-demethoxyubiquinol 3-hydroxylase">
    <location>
        <begin position="1"/>
        <end position="206"/>
    </location>
</feature>
<feature type="binding site" evidence="1">
    <location>
        <position position="55"/>
    </location>
    <ligand>
        <name>Fe cation</name>
        <dbReference type="ChEBI" id="CHEBI:24875"/>
        <label>1</label>
    </ligand>
</feature>
<feature type="binding site" evidence="1">
    <location>
        <position position="85"/>
    </location>
    <ligand>
        <name>Fe cation</name>
        <dbReference type="ChEBI" id="CHEBI:24875"/>
        <label>1</label>
    </ligand>
</feature>
<feature type="binding site" evidence="1">
    <location>
        <position position="85"/>
    </location>
    <ligand>
        <name>Fe cation</name>
        <dbReference type="ChEBI" id="CHEBI:24875"/>
        <label>2</label>
    </ligand>
</feature>
<feature type="binding site" evidence="1">
    <location>
        <position position="88"/>
    </location>
    <ligand>
        <name>Fe cation</name>
        <dbReference type="ChEBI" id="CHEBI:24875"/>
        <label>1</label>
    </ligand>
</feature>
<feature type="binding site" evidence="1">
    <location>
        <position position="137"/>
    </location>
    <ligand>
        <name>Fe cation</name>
        <dbReference type="ChEBI" id="CHEBI:24875"/>
        <label>2</label>
    </ligand>
</feature>
<feature type="binding site" evidence="1">
    <location>
        <position position="169"/>
    </location>
    <ligand>
        <name>Fe cation</name>
        <dbReference type="ChEBI" id="CHEBI:24875"/>
        <label>1</label>
    </ligand>
</feature>
<feature type="binding site" evidence="1">
    <location>
        <position position="169"/>
    </location>
    <ligand>
        <name>Fe cation</name>
        <dbReference type="ChEBI" id="CHEBI:24875"/>
        <label>2</label>
    </ligand>
</feature>
<feature type="binding site" evidence="1">
    <location>
        <position position="172"/>
    </location>
    <ligand>
        <name>Fe cation</name>
        <dbReference type="ChEBI" id="CHEBI:24875"/>
        <label>2</label>
    </ligand>
</feature>
<evidence type="ECO:0000255" key="1">
    <source>
        <dbReference type="HAMAP-Rule" id="MF_01658"/>
    </source>
</evidence>
<proteinExistence type="inferred from homology"/>
<gene>
    <name evidence="1" type="primary">coq7</name>
    <name type="ordered locus">AZOSEA05040</name>
    <name type="ORF">ebA942</name>
</gene>
<protein>
    <recommendedName>
        <fullName evidence="1">3-demethoxyubiquinol 3-hydroxylase</fullName>
        <shortName evidence="1">DMQ hydroxylase</shortName>
        <ecNumber evidence="1">1.14.99.60</ecNumber>
    </recommendedName>
    <alternativeName>
        <fullName evidence="1">2-nonaprenyl-3-methyl-6-methoxy-1,4-benzoquinol hydroxylase</fullName>
    </alternativeName>
</protein>
<name>COQ7_AROAE</name>
<dbReference type="EC" id="1.14.99.60" evidence="1"/>
<dbReference type="EMBL" id="CR555306">
    <property type="protein sequence ID" value="CAI06626.1"/>
    <property type="molecule type" value="Genomic_DNA"/>
</dbReference>
<dbReference type="RefSeq" id="WP_011236356.1">
    <property type="nucleotide sequence ID" value="NC_006513.1"/>
</dbReference>
<dbReference type="SMR" id="Q5P7T5"/>
<dbReference type="STRING" id="76114.ebA942"/>
<dbReference type="KEGG" id="eba:ebA942"/>
<dbReference type="eggNOG" id="COG2941">
    <property type="taxonomic scope" value="Bacteria"/>
</dbReference>
<dbReference type="HOGENOM" id="CLU_088601_0_0_4"/>
<dbReference type="OrthoDB" id="5192789at2"/>
<dbReference type="UniPathway" id="UPA00232"/>
<dbReference type="Proteomes" id="UP000006552">
    <property type="component" value="Chromosome"/>
</dbReference>
<dbReference type="GO" id="GO:0005886">
    <property type="term" value="C:plasma membrane"/>
    <property type="evidence" value="ECO:0007669"/>
    <property type="project" value="UniProtKB-SubCell"/>
</dbReference>
<dbReference type="GO" id="GO:0008682">
    <property type="term" value="F:3-demethoxyubiquinol 3-hydroxylase activity"/>
    <property type="evidence" value="ECO:0007669"/>
    <property type="project" value="UniProtKB-EC"/>
</dbReference>
<dbReference type="GO" id="GO:0046872">
    <property type="term" value="F:metal ion binding"/>
    <property type="evidence" value="ECO:0007669"/>
    <property type="project" value="UniProtKB-KW"/>
</dbReference>
<dbReference type="GO" id="GO:0006744">
    <property type="term" value="P:ubiquinone biosynthetic process"/>
    <property type="evidence" value="ECO:0007669"/>
    <property type="project" value="UniProtKB-UniRule"/>
</dbReference>
<dbReference type="CDD" id="cd01042">
    <property type="entry name" value="DMQH"/>
    <property type="match status" value="1"/>
</dbReference>
<dbReference type="Gene3D" id="1.20.1260.10">
    <property type="match status" value="1"/>
</dbReference>
<dbReference type="HAMAP" id="MF_01658">
    <property type="entry name" value="COQ7"/>
    <property type="match status" value="1"/>
</dbReference>
<dbReference type="InterPro" id="IPR047809">
    <property type="entry name" value="COQ7_proteobact"/>
</dbReference>
<dbReference type="InterPro" id="IPR012347">
    <property type="entry name" value="Ferritin-like"/>
</dbReference>
<dbReference type="InterPro" id="IPR009078">
    <property type="entry name" value="Ferritin-like_SF"/>
</dbReference>
<dbReference type="InterPro" id="IPR011566">
    <property type="entry name" value="Ubq_synth_Coq7"/>
</dbReference>
<dbReference type="NCBIfam" id="NF033656">
    <property type="entry name" value="DMQ_monoox_COQ7"/>
    <property type="match status" value="1"/>
</dbReference>
<dbReference type="PANTHER" id="PTHR11237:SF4">
    <property type="entry name" value="5-DEMETHOXYUBIQUINONE HYDROXYLASE, MITOCHONDRIAL"/>
    <property type="match status" value="1"/>
</dbReference>
<dbReference type="PANTHER" id="PTHR11237">
    <property type="entry name" value="COENZYME Q10 BIOSYNTHESIS PROTEIN 7"/>
    <property type="match status" value="1"/>
</dbReference>
<dbReference type="Pfam" id="PF03232">
    <property type="entry name" value="COQ7"/>
    <property type="match status" value="1"/>
</dbReference>
<dbReference type="SUPFAM" id="SSF47240">
    <property type="entry name" value="Ferritin-like"/>
    <property type="match status" value="1"/>
</dbReference>